<name>HIS1_SYNPW</name>
<dbReference type="EC" id="2.4.2.17" evidence="1"/>
<dbReference type="EMBL" id="CT971583">
    <property type="protein sequence ID" value="CAK23121.1"/>
    <property type="molecule type" value="Genomic_DNA"/>
</dbReference>
<dbReference type="SMR" id="A5GJK6"/>
<dbReference type="STRING" id="32051.SynWH7803_0695"/>
<dbReference type="KEGG" id="syx:SynWH7803_0695"/>
<dbReference type="eggNOG" id="COG0040">
    <property type="taxonomic scope" value="Bacteria"/>
</dbReference>
<dbReference type="HOGENOM" id="CLU_038115_2_0_3"/>
<dbReference type="OrthoDB" id="9801867at2"/>
<dbReference type="UniPathway" id="UPA00031">
    <property type="reaction ID" value="UER00006"/>
</dbReference>
<dbReference type="Proteomes" id="UP000001566">
    <property type="component" value="Chromosome"/>
</dbReference>
<dbReference type="GO" id="GO:0005737">
    <property type="term" value="C:cytoplasm"/>
    <property type="evidence" value="ECO:0007669"/>
    <property type="project" value="UniProtKB-SubCell"/>
</dbReference>
<dbReference type="GO" id="GO:0005524">
    <property type="term" value="F:ATP binding"/>
    <property type="evidence" value="ECO:0007669"/>
    <property type="project" value="UniProtKB-KW"/>
</dbReference>
<dbReference type="GO" id="GO:0003879">
    <property type="term" value="F:ATP phosphoribosyltransferase activity"/>
    <property type="evidence" value="ECO:0007669"/>
    <property type="project" value="UniProtKB-UniRule"/>
</dbReference>
<dbReference type="GO" id="GO:0000105">
    <property type="term" value="P:L-histidine biosynthetic process"/>
    <property type="evidence" value="ECO:0007669"/>
    <property type="project" value="UniProtKB-UniRule"/>
</dbReference>
<dbReference type="CDD" id="cd13595">
    <property type="entry name" value="PBP2_HisGs"/>
    <property type="match status" value="1"/>
</dbReference>
<dbReference type="FunFam" id="3.40.190.10:FF:000008">
    <property type="entry name" value="ATP phosphoribosyltransferase"/>
    <property type="match status" value="1"/>
</dbReference>
<dbReference type="Gene3D" id="3.40.190.10">
    <property type="entry name" value="Periplasmic binding protein-like II"/>
    <property type="match status" value="2"/>
</dbReference>
<dbReference type="HAMAP" id="MF_01018">
    <property type="entry name" value="HisG_Short"/>
    <property type="match status" value="1"/>
</dbReference>
<dbReference type="InterPro" id="IPR013820">
    <property type="entry name" value="ATP_PRibTrfase_cat"/>
</dbReference>
<dbReference type="InterPro" id="IPR018198">
    <property type="entry name" value="ATP_PRibTrfase_CS"/>
</dbReference>
<dbReference type="InterPro" id="IPR001348">
    <property type="entry name" value="ATP_PRibTrfase_HisG"/>
</dbReference>
<dbReference type="InterPro" id="IPR024893">
    <property type="entry name" value="ATP_PRibTrfase_HisG_short"/>
</dbReference>
<dbReference type="NCBIfam" id="TIGR00070">
    <property type="entry name" value="hisG"/>
    <property type="match status" value="1"/>
</dbReference>
<dbReference type="PANTHER" id="PTHR21403:SF8">
    <property type="entry name" value="ATP PHOSPHORIBOSYLTRANSFERASE"/>
    <property type="match status" value="1"/>
</dbReference>
<dbReference type="PANTHER" id="PTHR21403">
    <property type="entry name" value="ATP PHOSPHORIBOSYLTRANSFERASE ATP-PRTASE"/>
    <property type="match status" value="1"/>
</dbReference>
<dbReference type="Pfam" id="PF01634">
    <property type="entry name" value="HisG"/>
    <property type="match status" value="1"/>
</dbReference>
<dbReference type="SUPFAM" id="SSF53850">
    <property type="entry name" value="Periplasmic binding protein-like II"/>
    <property type="match status" value="1"/>
</dbReference>
<dbReference type="PROSITE" id="PS01316">
    <property type="entry name" value="ATP_P_PHORIBOSYLTR"/>
    <property type="match status" value="1"/>
</dbReference>
<proteinExistence type="inferred from homology"/>
<evidence type="ECO:0000255" key="1">
    <source>
        <dbReference type="HAMAP-Rule" id="MF_01018"/>
    </source>
</evidence>
<comment type="function">
    <text evidence="1">Catalyzes the condensation of ATP and 5-phosphoribose 1-diphosphate to form N'-(5'-phosphoribosyl)-ATP (PR-ATP). Has a crucial role in the pathway because the rate of histidine biosynthesis seems to be controlled primarily by regulation of HisG enzymatic activity.</text>
</comment>
<comment type="catalytic activity">
    <reaction evidence="1">
        <text>1-(5-phospho-beta-D-ribosyl)-ATP + diphosphate = 5-phospho-alpha-D-ribose 1-diphosphate + ATP</text>
        <dbReference type="Rhea" id="RHEA:18473"/>
        <dbReference type="ChEBI" id="CHEBI:30616"/>
        <dbReference type="ChEBI" id="CHEBI:33019"/>
        <dbReference type="ChEBI" id="CHEBI:58017"/>
        <dbReference type="ChEBI" id="CHEBI:73183"/>
        <dbReference type="EC" id="2.4.2.17"/>
    </reaction>
</comment>
<comment type="pathway">
    <text evidence="1">Amino-acid biosynthesis; L-histidine biosynthesis; L-histidine from 5-phospho-alpha-D-ribose 1-diphosphate: step 1/9.</text>
</comment>
<comment type="subunit">
    <text evidence="1">Heteromultimer composed of HisG and HisZ subunits.</text>
</comment>
<comment type="subcellular location">
    <subcellularLocation>
        <location evidence="1">Cytoplasm</location>
    </subcellularLocation>
</comment>
<comment type="domain">
    <text>Lacks the C-terminal regulatory region which is replaced by HisZ.</text>
</comment>
<comment type="similarity">
    <text evidence="1">Belongs to the ATP phosphoribosyltransferase family. Short subfamily.</text>
</comment>
<sequence length="217" mass="23410">MITVALAKGALLRESVERFQAAGLDFSAVLDPDNRQLMVPSTCGRARALLVRNGDVPVYVAYGQAQLGIVGYDVLREHQMPVAHLVDLGFGGCRMSVAVKNTSGYTRATDLPPHCRVASKFTRCARQYFDSIDLPVELVHLTGSVELGPITGIAEAIVDLVATGRTLRDNGLVAIEDLFHTTARLVGHPLALRLDQGELQSIIDVMQRSPHDAVGVN</sequence>
<protein>
    <recommendedName>
        <fullName evidence="1">ATP phosphoribosyltransferase</fullName>
        <shortName evidence="1">ATP-PRT</shortName>
        <shortName evidence="1">ATP-PRTase</shortName>
        <ecNumber evidence="1">2.4.2.17</ecNumber>
    </recommendedName>
</protein>
<feature type="chain" id="PRO_1000063314" description="ATP phosphoribosyltransferase">
    <location>
        <begin position="1"/>
        <end position="217"/>
    </location>
</feature>
<reference key="1">
    <citation type="submission" date="2006-05" db="EMBL/GenBank/DDBJ databases">
        <authorList>
            <consortium name="Genoscope"/>
        </authorList>
    </citation>
    <scope>NUCLEOTIDE SEQUENCE [LARGE SCALE GENOMIC DNA]</scope>
    <source>
        <strain>WH7803</strain>
    </source>
</reference>
<keyword id="KW-0028">Amino-acid biosynthesis</keyword>
<keyword id="KW-0067">ATP-binding</keyword>
<keyword id="KW-0963">Cytoplasm</keyword>
<keyword id="KW-0328">Glycosyltransferase</keyword>
<keyword id="KW-0368">Histidine biosynthesis</keyword>
<keyword id="KW-0547">Nucleotide-binding</keyword>
<keyword id="KW-1185">Reference proteome</keyword>
<keyword id="KW-0808">Transferase</keyword>
<gene>
    <name evidence="1" type="primary">hisG</name>
    <name type="ordered locus">SynWH7803_0695</name>
</gene>
<accession>A5GJK6</accession>
<organism>
    <name type="scientific">Synechococcus sp. (strain WH7803)</name>
    <dbReference type="NCBI Taxonomy" id="32051"/>
    <lineage>
        <taxon>Bacteria</taxon>
        <taxon>Bacillati</taxon>
        <taxon>Cyanobacteriota</taxon>
        <taxon>Cyanophyceae</taxon>
        <taxon>Synechococcales</taxon>
        <taxon>Synechococcaceae</taxon>
        <taxon>Synechococcus</taxon>
    </lineage>
</organism>